<reference key="1">
    <citation type="journal article" date="2006" name="Mol. Endocrinol.">
        <title>Mouse glucose transporter 9 splice variants are expressed in adult liver and kidney and are up-regulated in diabetes.</title>
        <authorList>
            <person name="Keembiyehetty C."/>
            <person name="Augustin R."/>
            <person name="Carayannopoulos M.O."/>
            <person name="Steer S."/>
            <person name="Manolescu A."/>
            <person name="Cheeseman C.I."/>
            <person name="Moley K.H."/>
        </authorList>
    </citation>
    <scope>NUCLEOTIDE SEQUENCE [MRNA] (ISOFORMS 1; 2 AND 3)</scope>
    <scope>SUBCELLULAR LOCATION</scope>
    <scope>TISSUE SPECIFICITY</scope>
    <scope>GLYCOSYLATION</scope>
    <scope>MUTAGENESIS OF ASN-71</scope>
</reference>
<reference key="2">
    <citation type="journal article" date="2005" name="Science">
        <title>The transcriptional landscape of the mammalian genome.</title>
        <authorList>
            <person name="Carninci P."/>
            <person name="Kasukawa T."/>
            <person name="Katayama S."/>
            <person name="Gough J."/>
            <person name="Frith M.C."/>
            <person name="Maeda N."/>
            <person name="Oyama R."/>
            <person name="Ravasi T."/>
            <person name="Lenhard B."/>
            <person name="Wells C."/>
            <person name="Kodzius R."/>
            <person name="Shimokawa K."/>
            <person name="Bajic V.B."/>
            <person name="Brenner S.E."/>
            <person name="Batalov S."/>
            <person name="Forrest A.R."/>
            <person name="Zavolan M."/>
            <person name="Davis M.J."/>
            <person name="Wilming L.G."/>
            <person name="Aidinis V."/>
            <person name="Allen J.E."/>
            <person name="Ambesi-Impiombato A."/>
            <person name="Apweiler R."/>
            <person name="Aturaliya R.N."/>
            <person name="Bailey T.L."/>
            <person name="Bansal M."/>
            <person name="Baxter L."/>
            <person name="Beisel K.W."/>
            <person name="Bersano T."/>
            <person name="Bono H."/>
            <person name="Chalk A.M."/>
            <person name="Chiu K.P."/>
            <person name="Choudhary V."/>
            <person name="Christoffels A."/>
            <person name="Clutterbuck D.R."/>
            <person name="Crowe M.L."/>
            <person name="Dalla E."/>
            <person name="Dalrymple B.P."/>
            <person name="de Bono B."/>
            <person name="Della Gatta G."/>
            <person name="di Bernardo D."/>
            <person name="Down T."/>
            <person name="Engstrom P."/>
            <person name="Fagiolini M."/>
            <person name="Faulkner G."/>
            <person name="Fletcher C.F."/>
            <person name="Fukushima T."/>
            <person name="Furuno M."/>
            <person name="Futaki S."/>
            <person name="Gariboldi M."/>
            <person name="Georgii-Hemming P."/>
            <person name="Gingeras T.R."/>
            <person name="Gojobori T."/>
            <person name="Green R.E."/>
            <person name="Gustincich S."/>
            <person name="Harbers M."/>
            <person name="Hayashi Y."/>
            <person name="Hensch T.K."/>
            <person name="Hirokawa N."/>
            <person name="Hill D."/>
            <person name="Huminiecki L."/>
            <person name="Iacono M."/>
            <person name="Ikeo K."/>
            <person name="Iwama A."/>
            <person name="Ishikawa T."/>
            <person name="Jakt M."/>
            <person name="Kanapin A."/>
            <person name="Katoh M."/>
            <person name="Kawasawa Y."/>
            <person name="Kelso J."/>
            <person name="Kitamura H."/>
            <person name="Kitano H."/>
            <person name="Kollias G."/>
            <person name="Krishnan S.P."/>
            <person name="Kruger A."/>
            <person name="Kummerfeld S.K."/>
            <person name="Kurochkin I.V."/>
            <person name="Lareau L.F."/>
            <person name="Lazarevic D."/>
            <person name="Lipovich L."/>
            <person name="Liu J."/>
            <person name="Liuni S."/>
            <person name="McWilliam S."/>
            <person name="Madan Babu M."/>
            <person name="Madera M."/>
            <person name="Marchionni L."/>
            <person name="Matsuda H."/>
            <person name="Matsuzawa S."/>
            <person name="Miki H."/>
            <person name="Mignone F."/>
            <person name="Miyake S."/>
            <person name="Morris K."/>
            <person name="Mottagui-Tabar S."/>
            <person name="Mulder N."/>
            <person name="Nakano N."/>
            <person name="Nakauchi H."/>
            <person name="Ng P."/>
            <person name="Nilsson R."/>
            <person name="Nishiguchi S."/>
            <person name="Nishikawa S."/>
            <person name="Nori F."/>
            <person name="Ohara O."/>
            <person name="Okazaki Y."/>
            <person name="Orlando V."/>
            <person name="Pang K.C."/>
            <person name="Pavan W.J."/>
            <person name="Pavesi G."/>
            <person name="Pesole G."/>
            <person name="Petrovsky N."/>
            <person name="Piazza S."/>
            <person name="Reed J."/>
            <person name="Reid J.F."/>
            <person name="Ring B.Z."/>
            <person name="Ringwald M."/>
            <person name="Rost B."/>
            <person name="Ruan Y."/>
            <person name="Salzberg S.L."/>
            <person name="Sandelin A."/>
            <person name="Schneider C."/>
            <person name="Schoenbach C."/>
            <person name="Sekiguchi K."/>
            <person name="Semple C.A."/>
            <person name="Seno S."/>
            <person name="Sessa L."/>
            <person name="Sheng Y."/>
            <person name="Shibata Y."/>
            <person name="Shimada H."/>
            <person name="Shimada K."/>
            <person name="Silva D."/>
            <person name="Sinclair B."/>
            <person name="Sperling S."/>
            <person name="Stupka E."/>
            <person name="Sugiura K."/>
            <person name="Sultana R."/>
            <person name="Takenaka Y."/>
            <person name="Taki K."/>
            <person name="Tammoja K."/>
            <person name="Tan S.L."/>
            <person name="Tang S."/>
            <person name="Taylor M.S."/>
            <person name="Tegner J."/>
            <person name="Teichmann S.A."/>
            <person name="Ueda H.R."/>
            <person name="van Nimwegen E."/>
            <person name="Verardo R."/>
            <person name="Wei C.L."/>
            <person name="Yagi K."/>
            <person name="Yamanishi H."/>
            <person name="Zabarovsky E."/>
            <person name="Zhu S."/>
            <person name="Zimmer A."/>
            <person name="Hide W."/>
            <person name="Bult C."/>
            <person name="Grimmond S.M."/>
            <person name="Teasdale R.D."/>
            <person name="Liu E.T."/>
            <person name="Brusic V."/>
            <person name="Quackenbush J."/>
            <person name="Wahlestedt C."/>
            <person name="Mattick J.S."/>
            <person name="Hume D.A."/>
            <person name="Kai C."/>
            <person name="Sasaki D."/>
            <person name="Tomaru Y."/>
            <person name="Fukuda S."/>
            <person name="Kanamori-Katayama M."/>
            <person name="Suzuki M."/>
            <person name="Aoki J."/>
            <person name="Arakawa T."/>
            <person name="Iida J."/>
            <person name="Imamura K."/>
            <person name="Itoh M."/>
            <person name="Kato T."/>
            <person name="Kawaji H."/>
            <person name="Kawagashira N."/>
            <person name="Kawashima T."/>
            <person name="Kojima M."/>
            <person name="Kondo S."/>
            <person name="Konno H."/>
            <person name="Nakano K."/>
            <person name="Ninomiya N."/>
            <person name="Nishio T."/>
            <person name="Okada M."/>
            <person name="Plessy C."/>
            <person name="Shibata K."/>
            <person name="Shiraki T."/>
            <person name="Suzuki S."/>
            <person name="Tagami M."/>
            <person name="Waki K."/>
            <person name="Watahiki A."/>
            <person name="Okamura-Oho Y."/>
            <person name="Suzuki H."/>
            <person name="Kawai J."/>
            <person name="Hayashizaki Y."/>
        </authorList>
    </citation>
    <scope>NUCLEOTIDE SEQUENCE [LARGE SCALE MRNA]</scope>
    <source>
        <strain>NOD</strain>
        <tissue>Spleen</tissue>
    </source>
</reference>
<reference key="3">
    <citation type="journal article" date="2009" name="PLoS Biol.">
        <title>Lineage-specific biology revealed by a finished genome assembly of the mouse.</title>
        <authorList>
            <person name="Church D.M."/>
            <person name="Goodstadt L."/>
            <person name="Hillier L.W."/>
            <person name="Zody M.C."/>
            <person name="Goldstein S."/>
            <person name="She X."/>
            <person name="Bult C.J."/>
            <person name="Agarwala R."/>
            <person name="Cherry J.L."/>
            <person name="DiCuccio M."/>
            <person name="Hlavina W."/>
            <person name="Kapustin Y."/>
            <person name="Meric P."/>
            <person name="Maglott D."/>
            <person name="Birtle Z."/>
            <person name="Marques A.C."/>
            <person name="Graves T."/>
            <person name="Zhou S."/>
            <person name="Teague B."/>
            <person name="Potamousis K."/>
            <person name="Churas C."/>
            <person name="Place M."/>
            <person name="Herschleb J."/>
            <person name="Runnheim R."/>
            <person name="Forrest D."/>
            <person name="Amos-Landgraf J."/>
            <person name="Schwartz D.C."/>
            <person name="Cheng Z."/>
            <person name="Lindblad-Toh K."/>
            <person name="Eichler E.E."/>
            <person name="Ponting C.P."/>
        </authorList>
    </citation>
    <scope>NUCLEOTIDE SEQUENCE [LARGE SCALE GENOMIC DNA]</scope>
    <source>
        <strain>C57BL/6J</strain>
    </source>
</reference>
<reference key="4">
    <citation type="submission" date="2005-07" db="EMBL/GenBank/DDBJ databases">
        <authorList>
            <person name="Mural R.J."/>
            <person name="Adams M.D."/>
            <person name="Myers E.W."/>
            <person name="Smith H.O."/>
            <person name="Venter J.C."/>
        </authorList>
    </citation>
    <scope>NUCLEOTIDE SEQUENCE [LARGE SCALE GENOMIC DNA]</scope>
</reference>
<reference key="5">
    <citation type="journal article" date="2004" name="Genome Res.">
        <title>The status, quality, and expansion of the NIH full-length cDNA project: the Mammalian Gene Collection (MGC).</title>
        <authorList>
            <consortium name="The MGC Project Team"/>
        </authorList>
    </citation>
    <scope>NUCLEOTIDE SEQUENCE [LARGE SCALE MRNA] (ISOFORMS 2 AND 4)</scope>
    <source>
        <strain>FVB/N</strain>
        <tissue>Brain</tissue>
    </source>
</reference>
<reference key="6">
    <citation type="journal article" date="2008" name="PLoS Med.">
        <title>SLC2A9 is a high-capacity urate transporter in humans.</title>
        <authorList>
            <person name="Caulfield M.J."/>
            <person name="Munroe P.B."/>
            <person name="O'Neill D."/>
            <person name="Witkowska K."/>
            <person name="Charchar F.J."/>
            <person name="Doblado M."/>
            <person name="Evans S."/>
            <person name="Eyheramendy S."/>
            <person name="Onipinla A."/>
            <person name="Howard P."/>
            <person name="Shaw-Hawkins S."/>
            <person name="Dobson R.J."/>
            <person name="Wallace C."/>
            <person name="Newhouse S.J."/>
            <person name="Brown M."/>
            <person name="Connell J.M."/>
            <person name="Dominiczak A."/>
            <person name="Farrall M."/>
            <person name="Lathrop G.M."/>
            <person name="Samani N.J."/>
            <person name="Kumari M."/>
            <person name="Marmot M."/>
            <person name="Brunner E."/>
            <person name="Chambers J."/>
            <person name="Elliott P."/>
            <person name="Kooner J."/>
            <person name="Laan M."/>
            <person name="Org E."/>
            <person name="Veldre G."/>
            <person name="Viigimaa M."/>
            <person name="Cappuccio F.P."/>
            <person name="Ji C."/>
            <person name="Iacone R."/>
            <person name="Strazzullo P."/>
            <person name="Moley K.H."/>
            <person name="Cheeseman C."/>
        </authorList>
    </citation>
    <scope>FUNCTION</scope>
</reference>
<reference key="7">
    <citation type="journal article" date="2010" name="Cell">
        <title>A tissue-specific atlas of mouse protein phosphorylation and expression.</title>
        <authorList>
            <person name="Huttlin E.L."/>
            <person name="Jedrychowski M.P."/>
            <person name="Elias J.E."/>
            <person name="Goswami T."/>
            <person name="Rad R."/>
            <person name="Beausoleil S.A."/>
            <person name="Villen J."/>
            <person name="Haas W."/>
            <person name="Sowa M.E."/>
            <person name="Gygi S.P."/>
        </authorList>
    </citation>
    <scope>IDENTIFICATION BY MASS SPECTROMETRY [LARGE SCALE ANALYSIS]</scope>
</reference>
<reference key="8">
    <citation type="journal article" date="2009" name="Am. J. Physiol.">
        <title>Mouse GLUT9: evidences for a urate uniporter.</title>
        <authorList>
            <person name="Bibert S."/>
            <person name="Hess S.K."/>
            <person name="Firsov D."/>
            <person name="Thorens B."/>
            <person name="Geering K."/>
            <person name="Horisberger J.D."/>
            <person name="Bonny O."/>
        </authorList>
    </citation>
    <scope>FUNCTION</scope>
    <scope>TRANSPORTER ACTIVITY</scope>
    <scope>BIOPHYSICOCHEMICAL PROPERTIES</scope>
    <scope>TISSUE SPECIFICITY</scope>
</reference>
<reference key="9">
    <citation type="journal article" date="2014" name="Nat. Commun.">
        <title>Early-onset metabolic syndrome in mice lacking the intestinal uric acid transporter SLC2A9.</title>
        <authorList>
            <person name="DeBosch B.J."/>
            <person name="Kluth O."/>
            <person name="Fujiwara H."/>
            <person name="Schuermann A."/>
            <person name="Moley K."/>
        </authorList>
    </citation>
    <scope>FUNCTION</scope>
    <scope>SUBCELLULAR LOCATION</scope>
    <scope>TISSUE SPECIFICITY</scope>
    <scope>DISRUPTION PHENOTYPE</scope>
</reference>
<keyword id="KW-0025">Alternative splicing</keyword>
<keyword id="KW-1003">Cell membrane</keyword>
<keyword id="KW-0325">Glycoprotein</keyword>
<keyword id="KW-0472">Membrane</keyword>
<keyword id="KW-0597">Phosphoprotein</keyword>
<keyword id="KW-1185">Reference proteome</keyword>
<keyword id="KW-0812">Transmembrane</keyword>
<keyword id="KW-1133">Transmembrane helix</keyword>
<name>GTR9_MOUSE</name>
<comment type="function">
    <text evidence="1">High-capacity urate transporter, which may play a role in the urate reabsorption by proximal tubules. May have a residual high-affinity, low-capacity glucose and fructose transporter activity. Transports urate at rates 45- to 60-fold faster than glucose. Does not transport galactose. May mediate small uptake of adenine but not of other nucleobases.</text>
</comment>
<comment type="catalytic activity">
    <reaction evidence="5">
        <text>urate(out) = urate(in)</text>
        <dbReference type="Rhea" id="RHEA:60368"/>
        <dbReference type="ChEBI" id="CHEBI:17775"/>
    </reaction>
</comment>
<comment type="biophysicochemical properties">
    <kinetics>
        <KM evidence="5">649 uM for urate</KM>
    </kinetics>
</comment>
<comment type="subcellular location">
    <subcellularLocation>
        <location evidence="4 6">Basolateral cell membrane</location>
        <topology evidence="2">Multi-pass membrane protein</topology>
    </subcellularLocation>
    <subcellularLocation>
        <location evidence="6">Apical cell membrane</location>
        <topology evidence="2">Multi-pass membrane protein</topology>
    </subcellularLocation>
</comment>
<comment type="alternative products">
    <event type="alternative splicing"/>
    <isoform>
        <id>Q3T9X0-1</id>
        <name>1</name>
        <name evidence="8 9">GLUT9a</name>
        <sequence type="displayed"/>
    </isoform>
    <isoform>
        <id>Q3T9X0-2</id>
        <name>2</name>
        <name evidence="8 9">GLUT9b</name>
        <sequence type="described" ref="VSP_060215"/>
    </isoform>
    <isoform>
        <id>Q3T9X0-3</id>
        <name>3</name>
        <name evidence="8">GLUT9Sa</name>
        <sequence type="described" ref="VSP_060216"/>
    </isoform>
    <isoform>
        <id>Q3T9X0-4</id>
        <name>4</name>
        <name evidence="8">GLUT9Sb</name>
        <sequence type="described" ref="VSP_060215 VSP_060216"/>
    </isoform>
</comment>
<comment type="tissue specificity">
    <text evidence="4 5 6">Highly expressed in the intestine, with high expression in the jejunum and ileum, the segments of the intestine that perform the majority of urate excretion (PubMed:25100214). Isoform 1: Widely expressed (PubMed:16293642). Isoform 1: In kidney, expressed at low levels in proximal tubules (PubMed:19587147). Isoform 2: Primarily expressed in liver and kidney; with specific expression in distal convoluted and connecting tubules of kidney (PubMed:16293642, PubMed:19587147).</text>
</comment>
<comment type="PTM">
    <text evidence="4">N-glycosylated.</text>
</comment>
<comment type="disruption phenotype">
    <text evidence="6">Conditional knockout mice lacking Slc2a9 in enterocytes are born at the expected Mendelian rate; they show no obvious phenotype and are fertile (PubMed:25100214). Mice however develop impaired enterocyte uric acid transport kinetics, hyperuricaemia, hyperuricosuria, spontaneous hypertension, dyslipidaemia and elevated body fat (PubMed:25100214).</text>
</comment>
<comment type="similarity">
    <text evidence="10">Belongs to the major facilitator superfamily. Sugar transporter (TC 2.A.1.1) family.</text>
</comment>
<comment type="caution">
    <text evidence="1">High-capacity urate transporter that was first described as a fructose and glucose transporter. Also described in the literature as high-affinity and low-capacity glucose and fructose transporter (By similarity). However, another group could not confirm transporter activity for glucose or fructose (By similarity).</text>
</comment>
<evidence type="ECO:0000250" key="1">
    <source>
        <dbReference type="UniProtKB" id="Q9NRM0"/>
    </source>
</evidence>
<evidence type="ECO:0000255" key="2"/>
<evidence type="ECO:0000256" key="3">
    <source>
        <dbReference type="SAM" id="MobiDB-lite"/>
    </source>
</evidence>
<evidence type="ECO:0000269" key="4">
    <source>
    </source>
</evidence>
<evidence type="ECO:0000269" key="5">
    <source>
    </source>
</evidence>
<evidence type="ECO:0000269" key="6">
    <source>
    </source>
</evidence>
<evidence type="ECO:0000303" key="7">
    <source>
    </source>
</evidence>
<evidence type="ECO:0000303" key="8">
    <source>
    </source>
</evidence>
<evidence type="ECO:0000303" key="9">
    <source>
    </source>
</evidence>
<evidence type="ECO:0000305" key="10"/>
<evidence type="ECO:0000312" key="11">
    <source>
        <dbReference type="MGI" id="MGI:2152844"/>
    </source>
</evidence>
<proteinExistence type="evidence at protein level"/>
<organism>
    <name type="scientific">Mus musculus</name>
    <name type="common">Mouse</name>
    <dbReference type="NCBI Taxonomy" id="10090"/>
    <lineage>
        <taxon>Eukaryota</taxon>
        <taxon>Metazoa</taxon>
        <taxon>Chordata</taxon>
        <taxon>Craniata</taxon>
        <taxon>Vertebrata</taxon>
        <taxon>Euteleostomi</taxon>
        <taxon>Mammalia</taxon>
        <taxon>Eutheria</taxon>
        <taxon>Euarchontoglires</taxon>
        <taxon>Glires</taxon>
        <taxon>Rodentia</taxon>
        <taxon>Myomorpha</taxon>
        <taxon>Muroidea</taxon>
        <taxon>Muridae</taxon>
        <taxon>Murinae</taxon>
        <taxon>Mus</taxon>
        <taxon>Mus</taxon>
    </lineage>
</organism>
<dbReference type="EMBL" id="AF490463">
    <property type="protein sequence ID" value="AAP44162.1"/>
    <property type="molecule type" value="mRNA"/>
</dbReference>
<dbReference type="EMBL" id="AF469480">
    <property type="protein sequence ID" value="AAP47095.1"/>
    <property type="molecule type" value="mRNA"/>
</dbReference>
<dbReference type="EMBL" id="AY776155">
    <property type="protein sequence ID" value="AAW78908.1"/>
    <property type="molecule type" value="mRNA"/>
</dbReference>
<dbReference type="EMBL" id="AK033725">
    <property type="protein sequence ID" value="BAC28448.1"/>
    <property type="molecule type" value="mRNA"/>
</dbReference>
<dbReference type="EMBL" id="AK156740">
    <property type="protein sequence ID" value="BAE33832.1"/>
    <property type="molecule type" value="mRNA"/>
</dbReference>
<dbReference type="EMBL" id="AK172234">
    <property type="protein sequence ID" value="BAE42900.1"/>
    <property type="molecule type" value="mRNA"/>
</dbReference>
<dbReference type="EMBL" id="AC084071">
    <property type="status" value="NOT_ANNOTATED_CDS"/>
    <property type="molecule type" value="Genomic_DNA"/>
</dbReference>
<dbReference type="EMBL" id="AC171271">
    <property type="status" value="NOT_ANNOTATED_CDS"/>
    <property type="molecule type" value="Genomic_DNA"/>
</dbReference>
<dbReference type="EMBL" id="CH466524">
    <property type="protein sequence ID" value="EDL37556.1"/>
    <property type="molecule type" value="Genomic_DNA"/>
</dbReference>
<dbReference type="EMBL" id="BC006076">
    <property type="protein sequence ID" value="AAH06076.1"/>
    <property type="molecule type" value="mRNA"/>
</dbReference>
<dbReference type="EMBL" id="BC138213">
    <property type="protein sequence ID" value="AAI38214.1"/>
    <property type="molecule type" value="mRNA"/>
</dbReference>
<dbReference type="EMBL" id="BC145198">
    <property type="protein sequence ID" value="AAI45199.1"/>
    <property type="molecule type" value="mRNA"/>
</dbReference>
<dbReference type="CCDS" id="CCDS19256.1">
    <molecule id="Q3T9X0-4"/>
</dbReference>
<dbReference type="CCDS" id="CCDS51482.1">
    <molecule id="Q3T9X0-3"/>
</dbReference>
<dbReference type="CCDS" id="CCDS51483.1">
    <molecule id="Q3T9X0-1"/>
</dbReference>
<dbReference type="CCDS" id="CCDS51484.1">
    <molecule id="Q3T9X0-2"/>
</dbReference>
<dbReference type="RefSeq" id="NP_001012363.2">
    <molecule id="Q3T9X0-2"/>
    <property type="nucleotide sequence ID" value="NM_001012363.2"/>
</dbReference>
<dbReference type="RefSeq" id="NP_001095884.1">
    <molecule id="Q3T9X0-1"/>
    <property type="nucleotide sequence ID" value="NM_001102414.1"/>
</dbReference>
<dbReference type="RefSeq" id="NP_001095885.1">
    <molecule id="Q3T9X0-3"/>
    <property type="nucleotide sequence ID" value="NM_001102415.1"/>
</dbReference>
<dbReference type="RefSeq" id="NP_663534.1">
    <molecule id="Q3T9X0-4"/>
    <property type="nucleotide sequence ID" value="NM_145559.2"/>
</dbReference>
<dbReference type="RefSeq" id="XP_006503746.1">
    <molecule id="Q3T9X0-2"/>
    <property type="nucleotide sequence ID" value="XM_006503683.5"/>
</dbReference>
<dbReference type="RefSeq" id="XP_006503747.1">
    <molecule id="Q3T9X0-2"/>
    <property type="nucleotide sequence ID" value="XM_006503684.5"/>
</dbReference>
<dbReference type="RefSeq" id="XP_006503748.1">
    <molecule id="Q3T9X0-2"/>
    <property type="nucleotide sequence ID" value="XM_006503685.5"/>
</dbReference>
<dbReference type="RefSeq" id="XP_006503749.1">
    <molecule id="Q3T9X0-4"/>
    <property type="nucleotide sequence ID" value="XM_006503686.5"/>
</dbReference>
<dbReference type="RefSeq" id="XP_006503750.1">
    <molecule id="Q3T9X0-4"/>
    <property type="nucleotide sequence ID" value="XM_006503687.5"/>
</dbReference>
<dbReference type="RefSeq" id="XP_011238990.1">
    <property type="nucleotide sequence ID" value="XM_011240688.2"/>
</dbReference>
<dbReference type="RefSeq" id="XP_011238991.1">
    <molecule id="Q3T9X0-2"/>
    <property type="nucleotide sequence ID" value="XM_011240689.4"/>
</dbReference>
<dbReference type="RefSeq" id="XP_011238992.1">
    <molecule id="Q3T9X0-2"/>
    <property type="nucleotide sequence ID" value="XM_011240690.3"/>
</dbReference>
<dbReference type="RefSeq" id="XP_030109935.1">
    <molecule id="Q3T9X0-2"/>
    <property type="nucleotide sequence ID" value="XM_030254075.2"/>
</dbReference>
<dbReference type="SMR" id="Q3T9X0"/>
<dbReference type="FunCoup" id="Q3T9X0">
    <property type="interactions" value="151"/>
</dbReference>
<dbReference type="STRING" id="10090.ENSMUSP00000063352"/>
<dbReference type="BindingDB" id="Q3T9X0"/>
<dbReference type="ChEMBL" id="CHEMBL5465311"/>
<dbReference type="TCDB" id="2.A.1.1.47">
    <property type="family name" value="the major facilitator superfamily (mfs)"/>
</dbReference>
<dbReference type="GlyCosmos" id="Q3T9X0">
    <property type="glycosylation" value="2 sites, No reported glycans"/>
</dbReference>
<dbReference type="GlyGen" id="Q3T9X0">
    <property type="glycosylation" value="2 sites"/>
</dbReference>
<dbReference type="iPTMnet" id="Q3T9X0"/>
<dbReference type="PhosphoSitePlus" id="Q3T9X0"/>
<dbReference type="jPOST" id="Q3T9X0"/>
<dbReference type="PaxDb" id="10090-ENSMUSP00000063352"/>
<dbReference type="ProteomicsDB" id="308426"/>
<dbReference type="ProteomicsDB" id="312849"/>
<dbReference type="ProteomicsDB" id="320503"/>
<dbReference type="ProteomicsDB" id="326260"/>
<dbReference type="ProteomicsDB" id="330641">
    <molecule id="Q3T9X0-1"/>
</dbReference>
<dbReference type="ProteomicsDB" id="335133"/>
<dbReference type="ProteomicsDB" id="341277"/>
<dbReference type="Antibodypedia" id="22860">
    <property type="antibodies" value="314 antibodies from 25 providers"/>
</dbReference>
<dbReference type="DNASU" id="117591"/>
<dbReference type="Ensembl" id="ENSMUST00000005238.13">
    <molecule id="Q3T9X0-4"/>
    <property type="protein sequence ID" value="ENSMUSP00000005238.7"/>
    <property type="gene ID" value="ENSMUSG00000005107.14"/>
</dbReference>
<dbReference type="Ensembl" id="ENSMUST00000067872.12">
    <molecule id="Q3T9X0-2"/>
    <property type="protein sequence ID" value="ENSMUSP00000066872.6"/>
    <property type="gene ID" value="ENSMUSG00000005107.14"/>
</dbReference>
<dbReference type="Ensembl" id="ENSMUST00000067886.12">
    <molecule id="Q3T9X0-1"/>
    <property type="protein sequence ID" value="ENSMUSP00000063352.6"/>
    <property type="gene ID" value="ENSMUSG00000005107.14"/>
</dbReference>
<dbReference type="Ensembl" id="ENSMUST00000129099.8">
    <molecule id="Q3T9X0-2"/>
    <property type="protein sequence ID" value="ENSMUSP00000122723.2"/>
    <property type="gene ID" value="ENSMUSG00000005107.14"/>
</dbReference>
<dbReference type="Ensembl" id="ENSMUST00000143758.8">
    <molecule id="Q3T9X0-3"/>
    <property type="protein sequence ID" value="ENSMUSP00000118430.2"/>
    <property type="gene ID" value="ENSMUSG00000005107.14"/>
</dbReference>
<dbReference type="Ensembl" id="ENSMUST00000155634.8">
    <molecule id="Q3T9X0-2"/>
    <property type="protein sequence ID" value="ENSMUSP00000116354.2"/>
    <property type="gene ID" value="ENSMUSG00000005107.14"/>
</dbReference>
<dbReference type="GeneID" id="117591"/>
<dbReference type="KEGG" id="mmu:117591"/>
<dbReference type="UCSC" id="uc008xgo.1">
    <molecule id="Q3T9X0-1"/>
    <property type="organism name" value="mouse"/>
</dbReference>
<dbReference type="UCSC" id="uc008xgp.1">
    <property type="organism name" value="mouse"/>
</dbReference>
<dbReference type="UCSC" id="uc008xgq.1">
    <property type="organism name" value="mouse"/>
</dbReference>
<dbReference type="UCSC" id="uc008xgr.1">
    <property type="organism name" value="mouse"/>
</dbReference>
<dbReference type="AGR" id="MGI:2152844"/>
<dbReference type="CTD" id="56606"/>
<dbReference type="MGI" id="MGI:2152844">
    <property type="gene designation" value="Slc2a9"/>
</dbReference>
<dbReference type="VEuPathDB" id="HostDB:ENSMUSG00000005107"/>
<dbReference type="eggNOG" id="KOG0569">
    <property type="taxonomic scope" value="Eukaryota"/>
</dbReference>
<dbReference type="GeneTree" id="ENSGT00940000159192"/>
<dbReference type="HOGENOM" id="CLU_001265_28_0_1"/>
<dbReference type="InParanoid" id="Q3T9X0"/>
<dbReference type="OMA" id="PADHIYM"/>
<dbReference type="OrthoDB" id="4540492at2759"/>
<dbReference type="PhylomeDB" id="Q3T9X0"/>
<dbReference type="TreeFam" id="TF313762"/>
<dbReference type="Reactome" id="R-MMU-189200">
    <property type="pathway name" value="Cellular hexose transport"/>
</dbReference>
<dbReference type="BioGRID-ORCS" id="117591">
    <property type="hits" value="0 hits in 79 CRISPR screens"/>
</dbReference>
<dbReference type="ChiTaRS" id="Slc2a9">
    <property type="organism name" value="mouse"/>
</dbReference>
<dbReference type="PRO" id="PR:Q3T9X0"/>
<dbReference type="Proteomes" id="UP000000589">
    <property type="component" value="Chromosome 5"/>
</dbReference>
<dbReference type="RNAct" id="Q3T9X0">
    <property type="molecule type" value="protein"/>
</dbReference>
<dbReference type="Bgee" id="ENSMUSG00000005107">
    <property type="expression patterns" value="Expressed in small intestine Peyer's patch and 82 other cell types or tissues"/>
</dbReference>
<dbReference type="ExpressionAtlas" id="Q3T9X0">
    <property type="expression patterns" value="baseline and differential"/>
</dbReference>
<dbReference type="GO" id="GO:0016324">
    <property type="term" value="C:apical plasma membrane"/>
    <property type="evidence" value="ECO:0000314"/>
    <property type="project" value="UniProtKB"/>
</dbReference>
<dbReference type="GO" id="GO:0016323">
    <property type="term" value="C:basolateral plasma membrane"/>
    <property type="evidence" value="ECO:0000314"/>
    <property type="project" value="UniProtKB"/>
</dbReference>
<dbReference type="GO" id="GO:0005635">
    <property type="term" value="C:nuclear envelope"/>
    <property type="evidence" value="ECO:0000314"/>
    <property type="project" value="MGI"/>
</dbReference>
<dbReference type="GO" id="GO:0005886">
    <property type="term" value="C:plasma membrane"/>
    <property type="evidence" value="ECO:0000314"/>
    <property type="project" value="MGI"/>
</dbReference>
<dbReference type="GO" id="GO:0055056">
    <property type="term" value="F:D-glucose transmembrane transporter activity"/>
    <property type="evidence" value="ECO:0000314"/>
    <property type="project" value="MGI"/>
</dbReference>
<dbReference type="GO" id="GO:0015143">
    <property type="term" value="F:urate transmembrane transporter activity"/>
    <property type="evidence" value="ECO:0000314"/>
    <property type="project" value="UniProtKB"/>
</dbReference>
<dbReference type="GO" id="GO:1904659">
    <property type="term" value="P:D-glucose transmembrane transport"/>
    <property type="evidence" value="ECO:0000314"/>
    <property type="project" value="MGI"/>
</dbReference>
<dbReference type="GO" id="GO:0046415">
    <property type="term" value="P:urate metabolic process"/>
    <property type="evidence" value="ECO:0007669"/>
    <property type="project" value="Ensembl"/>
</dbReference>
<dbReference type="GO" id="GO:0015747">
    <property type="term" value="P:urate transport"/>
    <property type="evidence" value="ECO:0000314"/>
    <property type="project" value="UniProtKB"/>
</dbReference>
<dbReference type="CDD" id="cd17432">
    <property type="entry name" value="MFS_GLUT_Class2"/>
    <property type="match status" value="1"/>
</dbReference>
<dbReference type="FunFam" id="1.20.1250.20:FF:000029">
    <property type="entry name" value="solute carrier family 2, facilitated glucose transporter member 4"/>
    <property type="match status" value="1"/>
</dbReference>
<dbReference type="Gene3D" id="1.20.1250.20">
    <property type="entry name" value="MFS general substrate transporter like domains"/>
    <property type="match status" value="1"/>
</dbReference>
<dbReference type="InterPro" id="IPR045263">
    <property type="entry name" value="GLUT"/>
</dbReference>
<dbReference type="InterPro" id="IPR020846">
    <property type="entry name" value="MFS_dom"/>
</dbReference>
<dbReference type="InterPro" id="IPR005828">
    <property type="entry name" value="MFS_sugar_transport-like"/>
</dbReference>
<dbReference type="InterPro" id="IPR036259">
    <property type="entry name" value="MFS_trans_sf"/>
</dbReference>
<dbReference type="InterPro" id="IPR003663">
    <property type="entry name" value="Sugar/inositol_transpt"/>
</dbReference>
<dbReference type="InterPro" id="IPR005829">
    <property type="entry name" value="Sugar_transporter_CS"/>
</dbReference>
<dbReference type="NCBIfam" id="TIGR00879">
    <property type="entry name" value="SP"/>
    <property type="match status" value="1"/>
</dbReference>
<dbReference type="PANTHER" id="PTHR23503">
    <property type="entry name" value="SOLUTE CARRIER FAMILY 2"/>
    <property type="match status" value="1"/>
</dbReference>
<dbReference type="PANTHER" id="PTHR23503:SF35">
    <property type="entry name" value="SOLUTE CARRIER FAMILY 2, FACILITATED GLUCOSE TRANSPORTER MEMBER 9"/>
    <property type="match status" value="1"/>
</dbReference>
<dbReference type="Pfam" id="PF00083">
    <property type="entry name" value="Sugar_tr"/>
    <property type="match status" value="1"/>
</dbReference>
<dbReference type="PRINTS" id="PR00171">
    <property type="entry name" value="SUGRTRNSPORT"/>
</dbReference>
<dbReference type="SUPFAM" id="SSF103473">
    <property type="entry name" value="MFS general substrate transporter"/>
    <property type="match status" value="1"/>
</dbReference>
<dbReference type="PROSITE" id="PS50850">
    <property type="entry name" value="MFS"/>
    <property type="match status" value="1"/>
</dbReference>
<dbReference type="PROSITE" id="PS00216">
    <property type="entry name" value="SUGAR_TRANSPORT_1"/>
    <property type="match status" value="1"/>
</dbReference>
<dbReference type="PROSITE" id="PS00217">
    <property type="entry name" value="SUGAR_TRANSPORT_2"/>
    <property type="match status" value="1"/>
</dbReference>
<protein>
    <recommendedName>
        <fullName evidence="10">Solute carrier family 2, facilitated glucose transporter member 9</fullName>
    </recommendedName>
    <alternativeName>
        <fullName evidence="7">Glucose transporter type 9</fullName>
        <shortName evidence="7">GLUT-9</shortName>
    </alternativeName>
    <alternativeName>
        <fullName evidence="10">Urate transporter</fullName>
    </alternativeName>
</protein>
<sequence length="538" mass="58621">MDSRELALASLMCDTGGPGELSVGHQQRRTKKWSFSLVVAALVGAFGSSFLYGYNLSVVNAPTPYIKAFYNGTWYRRHGQPIDPDTLTLLWSVTVSIFAIGGLVGTLMVKMIGKFLGRKSTLLVNNGFAISAALLMACSLRAGTFEMLIVGRFIMGVDGGIALSALPMYLNEISPKEIRGSLGQVTAIFICIGVFSGQLLGLPELLGRESTWPYLFGVIIVPALVQLASLPFLPESPRYLLFEKHDEAGAMKAFQTFLGKADVSQELEEALAESRVQRNLRLVSVLELLRAPFVRWQVITVIITMASYQLCGLNAIWFYTNSIFGKAGIPQDKIPYITLSTGGIETLAAIFSGLVIERLGRRPLLIGGFGLMALFFGTLTATLTLQDQAPWVPYLSIVCILAIIASFCSGPGGIPFILTGEFFQQSERPAAFMIAGTVNWLSNFAVGLLFPFIQKSLDSYCFLVFATICIAGATYFYFVLPETKNRTHAEISQAFAKRNKAQPPEVKADSAMTEEKANSQTEPDSSSTLDSYGQNKIV</sequence>
<feature type="chain" id="PRO_0000447626" description="Solute carrier family 2, facilitated glucose transporter member 9">
    <location>
        <begin position="1"/>
        <end position="538"/>
    </location>
</feature>
<feature type="topological domain" description="Cytoplasmic" evidence="10">
    <location>
        <begin position="1"/>
        <end position="34"/>
    </location>
</feature>
<feature type="transmembrane region" description="Helical; Name=1" evidence="2">
    <location>
        <begin position="35"/>
        <end position="54"/>
    </location>
</feature>
<feature type="topological domain" description="Extracellular" evidence="10">
    <location>
        <begin position="55"/>
        <end position="88"/>
    </location>
</feature>
<feature type="transmembrane region" description="Helical; Name=1" evidence="2">
    <location>
        <begin position="89"/>
        <end position="109"/>
    </location>
</feature>
<feature type="topological domain" description="Cytoplasmic" evidence="10">
    <location>
        <begin position="110"/>
        <end position="120"/>
    </location>
</feature>
<feature type="transmembrane region" description="Helical; Name=1" evidence="2">
    <location>
        <begin position="121"/>
        <end position="143"/>
    </location>
</feature>
<feature type="topological domain" description="Extracellular" evidence="10">
    <location>
        <begin position="144"/>
        <end position="148"/>
    </location>
</feature>
<feature type="transmembrane region" description="Helical; Name=1" evidence="2">
    <location>
        <begin position="149"/>
        <end position="170"/>
    </location>
</feature>
<feature type="topological domain" description="Cytoplasmic" evidence="10">
    <location>
        <begin position="171"/>
        <end position="181"/>
    </location>
</feature>
<feature type="transmembrane region" description="Helical; Name=1" evidence="2">
    <location>
        <begin position="182"/>
        <end position="200"/>
    </location>
</feature>
<feature type="topological domain" description="Extracellular" evidence="10">
    <location>
        <begin position="201"/>
        <end position="211"/>
    </location>
</feature>
<feature type="transmembrane region" description="Helical; Name=1" evidence="2">
    <location>
        <begin position="212"/>
        <end position="233"/>
    </location>
</feature>
<feature type="topological domain" description="Cytoplasmic" evidence="10">
    <location>
        <begin position="234"/>
        <end position="297"/>
    </location>
</feature>
<feature type="transmembrane region" description="Helical; Name=1" evidence="2">
    <location>
        <begin position="298"/>
        <end position="319"/>
    </location>
</feature>
<feature type="topological domain" description="Extracellular" evidence="10">
    <location>
        <begin position="320"/>
        <end position="333"/>
    </location>
</feature>
<feature type="transmembrane region" description="Helical; Name=1" evidence="2">
    <location>
        <begin position="334"/>
        <end position="356"/>
    </location>
</feature>
<feature type="topological domain" description="Cytoplasmic" evidence="10">
    <location>
        <begin position="357"/>
        <end position="362"/>
    </location>
</feature>
<feature type="transmembrane region" description="Helical; Name=1" evidence="2">
    <location>
        <begin position="363"/>
        <end position="385"/>
    </location>
</feature>
<feature type="topological domain" description="Extracellular" evidence="10">
    <location>
        <begin position="386"/>
        <end position="390"/>
    </location>
</feature>
<feature type="transmembrane region" description="Helical; Name=1" evidence="2">
    <location>
        <begin position="391"/>
        <end position="418"/>
    </location>
</feature>
<feature type="topological domain" description="Cytoplasmic" evidence="10">
    <location>
        <begin position="419"/>
        <end position="429"/>
    </location>
</feature>
<feature type="transmembrane region" description="Helical; Name=1" evidence="2">
    <location>
        <begin position="430"/>
        <end position="453"/>
    </location>
</feature>
<feature type="topological domain" description="Extracellular" evidence="10">
    <location>
        <begin position="454"/>
        <end position="458"/>
    </location>
</feature>
<feature type="transmembrane region" description="Helical; Name=1" evidence="2">
    <location>
        <begin position="459"/>
        <end position="480"/>
    </location>
</feature>
<feature type="topological domain" description="Cytoplasmic" evidence="10">
    <location>
        <begin position="481"/>
        <end position="538"/>
    </location>
</feature>
<feature type="region of interest" description="Disordered" evidence="3">
    <location>
        <begin position="495"/>
        <end position="538"/>
    </location>
</feature>
<feature type="compositionally biased region" description="Polar residues" evidence="3">
    <location>
        <begin position="518"/>
        <end position="538"/>
    </location>
</feature>
<feature type="modified residue" description="Phosphoserine" evidence="1">
    <location>
        <position position="3"/>
    </location>
</feature>
<feature type="glycosylation site" description="N-linked (GlcNAc...) asparagine" evidence="2">
    <location>
        <position position="55"/>
    </location>
</feature>
<feature type="glycosylation site" description="N-linked (GlcNAc...) asparagine" evidence="2">
    <location>
        <position position="71"/>
    </location>
</feature>
<feature type="splice variant" id="VSP_060215" description="In isoform 2 and isoform 4.">
    <original>MDSRELALASLMCDTGGPGELSVGHQQRRTK</original>
    <variation>MKLSEKNSAETKESQR</variation>
    <location>
        <begin position="1"/>
        <end position="31"/>
    </location>
</feature>
<feature type="splice variant" id="VSP_060216" description="In isoform 3 and isoform 4.">
    <original>RESTWPYLFGVIIVPALVQLASLPFLPESPRYLLFEKHDEAGAMKAFQTFLGKADVSQELEEALAESRVQRNLRLVSVLELLRAPFVRWQVITVIITMASYQLCGLNA</original>
    <variation>R</variation>
    <location>
        <begin position="208"/>
        <end position="315"/>
    </location>
</feature>
<feature type="mutagenesis site" description="Decreased N-glycosylation." evidence="4">
    <original>N</original>
    <variation>Q</variation>
    <location>
        <position position="71"/>
    </location>
</feature>
<feature type="sequence conflict" description="In Ref. 5; AAI45199." evidence="10" ref="5">
    <original>S</original>
    <variation>A</variation>
    <location>
        <position position="131"/>
    </location>
</feature>
<feature type="sequence conflict" description="In Ref. 5; AAI45199." evidence="10" ref="5">
    <original>A</original>
    <variation>T</variation>
    <location>
        <position position="261"/>
    </location>
</feature>
<feature type="sequence conflict" description="In Ref. 1; AAW78908/AAP47095." evidence="10" ref="1">
    <original>R</original>
    <variation>G</variation>
    <location>
        <position position="362"/>
    </location>
</feature>
<accession>Q3T9X0</accession>
<accession>A0A0J9YUW8</accession>
<accession>B7ZNE4</accession>
<accession>B9EHN5</accession>
<accession>D3Z1X2</accession>
<accession>D6REU9</accession>
<accession>Q5ERC7</accession>
<accession>Q7TSK9</accession>
<accession>Q7TSP0</accession>
<accession>Q8BZR3</accession>
<accession>Q99JJ2</accession>
<gene>
    <name evidence="11" type="primary">Slc2a9</name>
    <name evidence="7" type="synonym">Glut9</name>
</gene>